<name>CMOB_HAEIN</name>
<gene>
    <name evidence="1" type="primary">cmoB</name>
    <name type="ordered locus">HI_1351</name>
</gene>
<keyword id="KW-1185">Reference proteome</keyword>
<keyword id="KW-0808">Transferase</keyword>
<keyword id="KW-0819">tRNA processing</keyword>
<evidence type="ECO:0000255" key="1">
    <source>
        <dbReference type="HAMAP-Rule" id="MF_01590"/>
    </source>
</evidence>
<sequence length="321" mass="36854">MIDFRPFYQQIATTNLSDWLETLPCQLKEWETQTHGDYAKWSKIVDFLPNLHADEIDLKSAVKSDRTSPLSEGEKQRIIHHLKQLMPWRKGPYHLFGIHVDCEWRSDFKWDRVLPHLSPLQGRTILDVGCGSGYHMWRMVGEGAKMVVGIDPTELFLCQFEAVRKLLNNDRRANLIPLGIEQMQPLAAFDTVFSMGVLYHRKSPLDHLSQLKNQLVKGGELVLETLVVDGDINTVLVPADRYAKMKNVYFIPSVATLINWLEKVGFTNVRCVDVATTTLEEQRKTDWLENESLIDFLDPNDHSKTIEGYQAPKRAVILANK</sequence>
<dbReference type="EC" id="2.5.1.-" evidence="1"/>
<dbReference type="EMBL" id="L42023">
    <property type="protein sequence ID" value="AAC22998.1"/>
    <property type="molecule type" value="Genomic_DNA"/>
</dbReference>
<dbReference type="PIR" id="E64026">
    <property type="entry name" value="E64026"/>
</dbReference>
<dbReference type="RefSeq" id="NP_439502.1">
    <property type="nucleotide sequence ID" value="NC_000907.1"/>
</dbReference>
<dbReference type="SMR" id="P44167"/>
<dbReference type="STRING" id="71421.HI_1351"/>
<dbReference type="EnsemblBacteria" id="AAC22998">
    <property type="protein sequence ID" value="AAC22998"/>
    <property type="gene ID" value="HI_1351"/>
</dbReference>
<dbReference type="KEGG" id="hin:HI_1351"/>
<dbReference type="PATRIC" id="fig|71421.8.peg.1404"/>
<dbReference type="eggNOG" id="COG0500">
    <property type="taxonomic scope" value="Bacteria"/>
</dbReference>
<dbReference type="HOGENOM" id="CLU_052665_0_0_6"/>
<dbReference type="OrthoDB" id="9773188at2"/>
<dbReference type="PhylomeDB" id="P44167"/>
<dbReference type="BioCyc" id="HINF71421:G1GJ1-1376-MONOMER"/>
<dbReference type="Proteomes" id="UP000000579">
    <property type="component" value="Chromosome"/>
</dbReference>
<dbReference type="GO" id="GO:0008168">
    <property type="term" value="F:methyltransferase activity"/>
    <property type="evidence" value="ECO:0000318"/>
    <property type="project" value="GO_Central"/>
</dbReference>
<dbReference type="GO" id="GO:0016765">
    <property type="term" value="F:transferase activity, transferring alkyl or aryl (other than methyl) groups"/>
    <property type="evidence" value="ECO:0007669"/>
    <property type="project" value="UniProtKB-UniRule"/>
</dbReference>
<dbReference type="GO" id="GO:0002098">
    <property type="term" value="P:tRNA wobble uridine modification"/>
    <property type="evidence" value="ECO:0007669"/>
    <property type="project" value="InterPro"/>
</dbReference>
<dbReference type="CDD" id="cd02440">
    <property type="entry name" value="AdoMet_MTases"/>
    <property type="match status" value="1"/>
</dbReference>
<dbReference type="Gene3D" id="3.40.50.150">
    <property type="entry name" value="Vaccinia Virus protein VP39"/>
    <property type="match status" value="1"/>
</dbReference>
<dbReference type="HAMAP" id="MF_01590">
    <property type="entry name" value="tRNA_carboxymethyltr_CmoB"/>
    <property type="match status" value="1"/>
</dbReference>
<dbReference type="InterPro" id="IPR010017">
    <property type="entry name" value="CmoB"/>
</dbReference>
<dbReference type="InterPro" id="IPR027555">
    <property type="entry name" value="Mo5U34_MeTrfas-like"/>
</dbReference>
<dbReference type="InterPro" id="IPR029063">
    <property type="entry name" value="SAM-dependent_MTases_sf"/>
</dbReference>
<dbReference type="NCBIfam" id="NF011650">
    <property type="entry name" value="PRK15068.1"/>
    <property type="match status" value="1"/>
</dbReference>
<dbReference type="NCBIfam" id="TIGR00452">
    <property type="entry name" value="tRNA 5-methoxyuridine(34)/uridine 5-oxyacetic acid(34) synthase CmoB"/>
    <property type="match status" value="1"/>
</dbReference>
<dbReference type="PANTHER" id="PTHR43861:SF3">
    <property type="entry name" value="PUTATIVE (AFU_ORTHOLOGUE AFUA_2G14390)-RELATED"/>
    <property type="match status" value="1"/>
</dbReference>
<dbReference type="PANTHER" id="PTHR43861">
    <property type="entry name" value="TRANS-ACONITATE 2-METHYLTRANSFERASE-RELATED"/>
    <property type="match status" value="1"/>
</dbReference>
<dbReference type="Pfam" id="PF08003">
    <property type="entry name" value="Methyltransf_9"/>
    <property type="match status" value="1"/>
</dbReference>
<dbReference type="SUPFAM" id="SSF53335">
    <property type="entry name" value="S-adenosyl-L-methionine-dependent methyltransferases"/>
    <property type="match status" value="1"/>
</dbReference>
<feature type="chain" id="PRO_0000169086" description="tRNA U34 carboxymethyltransferase">
    <location>
        <begin position="1"/>
        <end position="321"/>
    </location>
</feature>
<feature type="binding site" evidence="1">
    <location>
        <position position="90"/>
    </location>
    <ligand>
        <name>carboxy-S-adenosyl-L-methionine</name>
        <dbReference type="ChEBI" id="CHEBI:134278"/>
    </ligand>
</feature>
<feature type="binding site" evidence="1">
    <location>
        <position position="104"/>
    </location>
    <ligand>
        <name>carboxy-S-adenosyl-L-methionine</name>
        <dbReference type="ChEBI" id="CHEBI:134278"/>
    </ligand>
</feature>
<feature type="binding site" evidence="1">
    <location>
        <position position="109"/>
    </location>
    <ligand>
        <name>carboxy-S-adenosyl-L-methionine</name>
        <dbReference type="ChEBI" id="CHEBI:134278"/>
    </ligand>
</feature>
<feature type="binding site" evidence="1">
    <location>
        <position position="129"/>
    </location>
    <ligand>
        <name>carboxy-S-adenosyl-L-methionine</name>
        <dbReference type="ChEBI" id="CHEBI:134278"/>
    </ligand>
</feature>
<feature type="binding site" evidence="1">
    <location>
        <begin position="151"/>
        <end position="153"/>
    </location>
    <ligand>
        <name>carboxy-S-adenosyl-L-methionine</name>
        <dbReference type="ChEBI" id="CHEBI:134278"/>
    </ligand>
</feature>
<feature type="binding site" evidence="1">
    <location>
        <begin position="180"/>
        <end position="181"/>
    </location>
    <ligand>
        <name>carboxy-S-adenosyl-L-methionine</name>
        <dbReference type="ChEBI" id="CHEBI:134278"/>
    </ligand>
</feature>
<feature type="binding site" evidence="1">
    <location>
        <position position="195"/>
    </location>
    <ligand>
        <name>carboxy-S-adenosyl-L-methionine</name>
        <dbReference type="ChEBI" id="CHEBI:134278"/>
    </ligand>
</feature>
<feature type="binding site" evidence="1">
    <location>
        <position position="199"/>
    </location>
    <ligand>
        <name>carboxy-S-adenosyl-L-methionine</name>
        <dbReference type="ChEBI" id="CHEBI:134278"/>
    </ligand>
</feature>
<feature type="binding site" evidence="1">
    <location>
        <position position="314"/>
    </location>
    <ligand>
        <name>carboxy-S-adenosyl-L-methionine</name>
        <dbReference type="ChEBI" id="CHEBI:134278"/>
    </ligand>
</feature>
<protein>
    <recommendedName>
        <fullName evidence="1">tRNA U34 carboxymethyltransferase</fullName>
        <ecNumber evidence="1">2.5.1.-</ecNumber>
    </recommendedName>
</protein>
<reference key="1">
    <citation type="journal article" date="1995" name="Science">
        <title>Whole-genome random sequencing and assembly of Haemophilus influenzae Rd.</title>
        <authorList>
            <person name="Fleischmann R.D."/>
            <person name="Adams M.D."/>
            <person name="White O."/>
            <person name="Clayton R.A."/>
            <person name="Kirkness E.F."/>
            <person name="Kerlavage A.R."/>
            <person name="Bult C.J."/>
            <person name="Tomb J.-F."/>
            <person name="Dougherty B.A."/>
            <person name="Merrick J.M."/>
            <person name="McKenney K."/>
            <person name="Sutton G.G."/>
            <person name="FitzHugh W."/>
            <person name="Fields C.A."/>
            <person name="Gocayne J.D."/>
            <person name="Scott J.D."/>
            <person name="Shirley R."/>
            <person name="Liu L.-I."/>
            <person name="Glodek A."/>
            <person name="Kelley J.M."/>
            <person name="Weidman J.F."/>
            <person name="Phillips C.A."/>
            <person name="Spriggs T."/>
            <person name="Hedblom E."/>
            <person name="Cotton M.D."/>
            <person name="Utterback T.R."/>
            <person name="Hanna M.C."/>
            <person name="Nguyen D.T."/>
            <person name="Saudek D.M."/>
            <person name="Brandon R.C."/>
            <person name="Fine L.D."/>
            <person name="Fritchman J.L."/>
            <person name="Fuhrmann J.L."/>
            <person name="Geoghagen N.S.M."/>
            <person name="Gnehm C.L."/>
            <person name="McDonald L.A."/>
            <person name="Small K.V."/>
            <person name="Fraser C.M."/>
            <person name="Smith H.O."/>
            <person name="Venter J.C."/>
        </authorList>
    </citation>
    <scope>NUCLEOTIDE SEQUENCE [LARGE SCALE GENOMIC DNA]</scope>
    <source>
        <strain>ATCC 51907 / DSM 11121 / KW20 / Rd</strain>
    </source>
</reference>
<reference key="2">
    <citation type="journal article" date="2000" name="Electrophoresis">
        <title>Two-dimensional map of the proteome of Haemophilus influenzae.</title>
        <authorList>
            <person name="Langen H."/>
            <person name="Takacs B."/>
            <person name="Evers S."/>
            <person name="Berndt P."/>
            <person name="Lahm H.W."/>
            <person name="Wipf B."/>
            <person name="Gray C."/>
            <person name="Fountoulakis M."/>
        </authorList>
    </citation>
    <scope>IDENTIFICATION BY MASS SPECTROMETRY</scope>
    <source>
        <strain>ATCC 51907 / DSM 11121 / KW20 / Rd</strain>
    </source>
</reference>
<organism>
    <name type="scientific">Haemophilus influenzae (strain ATCC 51907 / DSM 11121 / KW20 / Rd)</name>
    <dbReference type="NCBI Taxonomy" id="71421"/>
    <lineage>
        <taxon>Bacteria</taxon>
        <taxon>Pseudomonadati</taxon>
        <taxon>Pseudomonadota</taxon>
        <taxon>Gammaproteobacteria</taxon>
        <taxon>Pasteurellales</taxon>
        <taxon>Pasteurellaceae</taxon>
        <taxon>Haemophilus</taxon>
    </lineage>
</organism>
<proteinExistence type="evidence at protein level"/>
<comment type="function">
    <text evidence="1">Catalyzes carboxymethyl transfer from carboxy-S-adenosyl-L-methionine (Cx-SAM) to 5-hydroxyuridine (ho5U) to form 5-carboxymethoxyuridine (cmo5U) at position 34 in tRNAs.</text>
</comment>
<comment type="catalytic activity">
    <reaction evidence="1">
        <text>carboxy-S-adenosyl-L-methionine + 5-hydroxyuridine(34) in tRNA = 5-carboxymethoxyuridine(34) in tRNA + S-adenosyl-L-homocysteine + H(+)</text>
        <dbReference type="Rhea" id="RHEA:52848"/>
        <dbReference type="Rhea" id="RHEA-COMP:13381"/>
        <dbReference type="Rhea" id="RHEA-COMP:13383"/>
        <dbReference type="ChEBI" id="CHEBI:15378"/>
        <dbReference type="ChEBI" id="CHEBI:57856"/>
        <dbReference type="ChEBI" id="CHEBI:134278"/>
        <dbReference type="ChEBI" id="CHEBI:136877"/>
        <dbReference type="ChEBI" id="CHEBI:136879"/>
    </reaction>
</comment>
<comment type="subunit">
    <text evidence="1">Homotetramer.</text>
</comment>
<comment type="similarity">
    <text evidence="1">Belongs to the class I-like SAM-binding methyltransferase superfamily. CmoB family.</text>
</comment>
<accession>P44167</accession>